<sequence length="663" mass="74364">MNKQNNYSDDSIQVLEGLEAVRKRPGMYIGSTDKRGLHHLVYEIVDNSVDEVLNGYGNEIDVTINKDGSISIEDNGRGMPTGIHKSGKPTVEVIFTVLHAGGKFGQGGYKTSGGLHGVGASVVNALSEWLEVEIHRDGNIYHQSFKNGGSPSSGLVKKGKTKKTGTKVTFKPDDTIFKASTSFNFDVLSERLQESAFLLKNLKITLNDLRSGKERQEHYHYEEGIKEFVSYVNEGKEVLHDVATFSGEANGIEVDVAFQYNDQYSESILSFVNNVRTKDGGTHEVGFKTAMTRVFNDYARRINELKTKDKNLDGNDIREGLTAVVSVRIPEELLQFEGQTKSKLGTSEARSAVDSVVADKLPFYLEEKGQLSKSLVKKAIKAQQAREAARKAREDARSGKKNKRKDTLLSGKLTPAQSKNTEKNELYLVEGDSAGGSAKLGRDRKFQAILPLRGKVINTEKARLEDIFKNEEINTIIHTIGAGVGTDFKIEDSNYNRVIIMTDADTDGAHIQVLLLTFFFKYMKPLVQAGRVFIALPPLYKLEKGKGKTKRVEYAWTDEELNKLQKELGKGFTLQRYKGLGEMNPEQLWETTMNPETRTLIRVQVEDEVRSSKRVTTLMGDKVQPRREWIEKHVEFGMQEDQSILDNSEVQVLENDQFDEEEI</sequence>
<comment type="function">
    <text evidence="1">Topoisomerase IV is essential for chromosome segregation. It relaxes supercoiled DNA. Performs the decatenation events required during the replication of a circular DNA molecule.</text>
</comment>
<comment type="catalytic activity">
    <reaction evidence="1">
        <text>ATP-dependent breakage, passage and rejoining of double-stranded DNA.</text>
        <dbReference type="EC" id="5.6.2.2"/>
    </reaction>
</comment>
<comment type="cofactor">
    <cofactor evidence="1">
        <name>Mg(2+)</name>
        <dbReference type="ChEBI" id="CHEBI:18420"/>
    </cofactor>
    <cofactor evidence="1">
        <name>Mn(2+)</name>
        <dbReference type="ChEBI" id="CHEBI:29035"/>
    </cofactor>
    <cofactor evidence="1">
        <name>Ca(2+)</name>
        <dbReference type="ChEBI" id="CHEBI:29108"/>
    </cofactor>
    <text evidence="1">Binds two Mg(2+) per subunit. The magnesium ions form salt bridges with both the protein and the DNA. Can also accept other divalent metal cations, such as Mn(2+) or Ca(2+).</text>
</comment>
<comment type="subunit">
    <text evidence="1">Heterotetramer composed of ParC and ParE.</text>
</comment>
<comment type="similarity">
    <text evidence="1">Belongs to the type II topoisomerase family. ParE type 2 subfamily.</text>
</comment>
<comment type="sequence caution" evidence="3">
    <conflict type="erroneous initiation">
        <sequence resource="EMBL-CDS" id="BAB95106"/>
    </conflict>
</comment>
<proteinExistence type="inferred from homology"/>
<feature type="chain" id="PRO_0000145440" description="DNA topoisomerase 4 subunit B">
    <location>
        <begin position="1"/>
        <end position="663"/>
    </location>
</feature>
<feature type="domain" description="Toprim" evidence="1">
    <location>
        <begin position="424"/>
        <end position="538"/>
    </location>
</feature>
<feature type="region of interest" description="Disordered" evidence="2">
    <location>
        <begin position="386"/>
        <end position="416"/>
    </location>
</feature>
<feature type="compositionally biased region" description="Basic and acidic residues" evidence="2">
    <location>
        <begin position="387"/>
        <end position="398"/>
    </location>
</feature>
<feature type="binding site" evidence="1">
    <location>
        <position position="7"/>
    </location>
    <ligand>
        <name>ATP</name>
        <dbReference type="ChEBI" id="CHEBI:30616"/>
    </ligand>
</feature>
<feature type="binding site" evidence="1">
    <location>
        <position position="47"/>
    </location>
    <ligand>
        <name>ATP</name>
        <dbReference type="ChEBI" id="CHEBI:30616"/>
    </ligand>
</feature>
<feature type="binding site" evidence="1">
    <location>
        <position position="74"/>
    </location>
    <ligand>
        <name>ATP</name>
        <dbReference type="ChEBI" id="CHEBI:30616"/>
    </ligand>
</feature>
<feature type="binding site" evidence="1">
    <location>
        <begin position="114"/>
        <end position="120"/>
    </location>
    <ligand>
        <name>ATP</name>
        <dbReference type="ChEBI" id="CHEBI:30616"/>
    </ligand>
</feature>
<feature type="binding site" evidence="1">
    <location>
        <position position="341"/>
    </location>
    <ligand>
        <name>ATP</name>
        <dbReference type="ChEBI" id="CHEBI:30616"/>
    </ligand>
</feature>
<feature type="binding site" evidence="1">
    <location>
        <position position="430"/>
    </location>
    <ligand>
        <name>Mg(2+)</name>
        <dbReference type="ChEBI" id="CHEBI:18420"/>
        <label>1</label>
        <note>catalytic</note>
    </ligand>
</feature>
<feature type="binding site" evidence="1">
    <location>
        <position position="503"/>
    </location>
    <ligand>
        <name>Mg(2+)</name>
        <dbReference type="ChEBI" id="CHEBI:18420"/>
        <label>1</label>
        <note>catalytic</note>
    </ligand>
</feature>
<feature type="binding site" evidence="1">
    <location>
        <position position="503"/>
    </location>
    <ligand>
        <name>Mg(2+)</name>
        <dbReference type="ChEBI" id="CHEBI:18420"/>
        <label>2</label>
    </ligand>
</feature>
<feature type="binding site" evidence="1">
    <location>
        <position position="505"/>
    </location>
    <ligand>
        <name>Mg(2+)</name>
        <dbReference type="ChEBI" id="CHEBI:18420"/>
        <label>2</label>
    </ligand>
</feature>
<feature type="site" description="Interaction with DNA" evidence="1">
    <location>
        <position position="455"/>
    </location>
</feature>
<feature type="site" description="Interaction with DNA" evidence="1">
    <location>
        <position position="458"/>
    </location>
</feature>
<feature type="site" description="Interaction with DNA" evidence="1">
    <location>
        <position position="510"/>
    </location>
</feature>
<feature type="site" description="Interaction with DNA" evidence="1">
    <location>
        <position position="626"/>
    </location>
</feature>
<dbReference type="EC" id="5.6.2.2" evidence="1"/>
<dbReference type="EMBL" id="BA000033">
    <property type="protein sequence ID" value="BAB95106.1"/>
    <property type="status" value="ALT_INIT"/>
    <property type="molecule type" value="Genomic_DNA"/>
</dbReference>
<dbReference type="RefSeq" id="WP_001548666.1">
    <property type="nucleotide sequence ID" value="NC_003923.1"/>
</dbReference>
<dbReference type="SMR" id="P0A0K9"/>
<dbReference type="KEGG" id="sam:MW1241"/>
<dbReference type="HOGENOM" id="CLU_006146_4_1_9"/>
<dbReference type="GO" id="GO:0005694">
    <property type="term" value="C:chromosome"/>
    <property type="evidence" value="ECO:0007669"/>
    <property type="project" value="InterPro"/>
</dbReference>
<dbReference type="GO" id="GO:0005524">
    <property type="term" value="F:ATP binding"/>
    <property type="evidence" value="ECO:0007669"/>
    <property type="project" value="UniProtKB-UniRule"/>
</dbReference>
<dbReference type="GO" id="GO:0003677">
    <property type="term" value="F:DNA binding"/>
    <property type="evidence" value="ECO:0007669"/>
    <property type="project" value="UniProtKB-UniRule"/>
</dbReference>
<dbReference type="GO" id="GO:0034335">
    <property type="term" value="F:DNA negative supercoiling activity"/>
    <property type="evidence" value="ECO:0007669"/>
    <property type="project" value="UniProtKB-ARBA"/>
</dbReference>
<dbReference type="GO" id="GO:0046872">
    <property type="term" value="F:metal ion binding"/>
    <property type="evidence" value="ECO:0007669"/>
    <property type="project" value="UniProtKB-KW"/>
</dbReference>
<dbReference type="GO" id="GO:0007059">
    <property type="term" value="P:chromosome segregation"/>
    <property type="evidence" value="ECO:0007669"/>
    <property type="project" value="UniProtKB-UniRule"/>
</dbReference>
<dbReference type="GO" id="GO:0006265">
    <property type="term" value="P:DNA topological change"/>
    <property type="evidence" value="ECO:0007669"/>
    <property type="project" value="UniProtKB-UniRule"/>
</dbReference>
<dbReference type="CDD" id="cd16928">
    <property type="entry name" value="HATPase_GyrB-like"/>
    <property type="match status" value="1"/>
</dbReference>
<dbReference type="CDD" id="cd00822">
    <property type="entry name" value="TopoII_Trans_DNA_gyrase"/>
    <property type="match status" value="1"/>
</dbReference>
<dbReference type="FunFam" id="3.30.230.10:FF:000005">
    <property type="entry name" value="DNA gyrase subunit B"/>
    <property type="match status" value="1"/>
</dbReference>
<dbReference type="FunFam" id="3.30.565.10:FF:000002">
    <property type="entry name" value="DNA gyrase subunit B"/>
    <property type="match status" value="1"/>
</dbReference>
<dbReference type="FunFam" id="3.40.50.670:FF:000002">
    <property type="entry name" value="DNA gyrase subunit B"/>
    <property type="match status" value="1"/>
</dbReference>
<dbReference type="Gene3D" id="3.30.230.10">
    <property type="match status" value="1"/>
</dbReference>
<dbReference type="Gene3D" id="3.40.50.670">
    <property type="match status" value="1"/>
</dbReference>
<dbReference type="Gene3D" id="3.30.565.10">
    <property type="entry name" value="Histidine kinase-like ATPase, C-terminal domain"/>
    <property type="match status" value="1"/>
</dbReference>
<dbReference type="HAMAP" id="MF_00939">
    <property type="entry name" value="ParE_type2"/>
    <property type="match status" value="1"/>
</dbReference>
<dbReference type="InterPro" id="IPR002288">
    <property type="entry name" value="DNA_gyrase_B_C"/>
</dbReference>
<dbReference type="InterPro" id="IPR036890">
    <property type="entry name" value="HATPase_C_sf"/>
</dbReference>
<dbReference type="InterPro" id="IPR005740">
    <property type="entry name" value="ParE_type2"/>
</dbReference>
<dbReference type="InterPro" id="IPR020568">
    <property type="entry name" value="Ribosomal_Su5_D2-typ_SF"/>
</dbReference>
<dbReference type="InterPro" id="IPR014721">
    <property type="entry name" value="Ribsml_uS5_D2-typ_fold_subgr"/>
</dbReference>
<dbReference type="InterPro" id="IPR001241">
    <property type="entry name" value="Topo_IIA"/>
</dbReference>
<dbReference type="InterPro" id="IPR013760">
    <property type="entry name" value="Topo_IIA-like_dom_sf"/>
</dbReference>
<dbReference type="InterPro" id="IPR000565">
    <property type="entry name" value="Topo_IIA_B"/>
</dbReference>
<dbReference type="InterPro" id="IPR013759">
    <property type="entry name" value="Topo_IIA_B_C"/>
</dbReference>
<dbReference type="InterPro" id="IPR013506">
    <property type="entry name" value="Topo_IIA_bsu_dom2"/>
</dbReference>
<dbReference type="InterPro" id="IPR018522">
    <property type="entry name" value="TopoIIA_CS"/>
</dbReference>
<dbReference type="InterPro" id="IPR006171">
    <property type="entry name" value="TOPRIM_dom"/>
</dbReference>
<dbReference type="NCBIfam" id="TIGR01058">
    <property type="entry name" value="parE_Gpos"/>
    <property type="match status" value="1"/>
</dbReference>
<dbReference type="NCBIfam" id="NF004189">
    <property type="entry name" value="PRK05644.1"/>
    <property type="match status" value="1"/>
</dbReference>
<dbReference type="PANTHER" id="PTHR45866">
    <property type="entry name" value="DNA GYRASE/TOPOISOMERASE SUBUNIT B"/>
    <property type="match status" value="1"/>
</dbReference>
<dbReference type="PANTHER" id="PTHR45866:SF12">
    <property type="entry name" value="DNA TOPOISOMERASE 4 SUBUNIT B"/>
    <property type="match status" value="1"/>
</dbReference>
<dbReference type="Pfam" id="PF00204">
    <property type="entry name" value="DNA_gyraseB"/>
    <property type="match status" value="1"/>
</dbReference>
<dbReference type="Pfam" id="PF00986">
    <property type="entry name" value="DNA_gyraseB_C"/>
    <property type="match status" value="1"/>
</dbReference>
<dbReference type="Pfam" id="PF02518">
    <property type="entry name" value="HATPase_c"/>
    <property type="match status" value="1"/>
</dbReference>
<dbReference type="Pfam" id="PF01751">
    <property type="entry name" value="Toprim"/>
    <property type="match status" value="1"/>
</dbReference>
<dbReference type="PRINTS" id="PR01159">
    <property type="entry name" value="DNAGYRASEB"/>
</dbReference>
<dbReference type="PRINTS" id="PR00418">
    <property type="entry name" value="TPI2FAMILY"/>
</dbReference>
<dbReference type="SMART" id="SM00387">
    <property type="entry name" value="HATPase_c"/>
    <property type="match status" value="1"/>
</dbReference>
<dbReference type="SMART" id="SM00433">
    <property type="entry name" value="TOP2c"/>
    <property type="match status" value="1"/>
</dbReference>
<dbReference type="SUPFAM" id="SSF55874">
    <property type="entry name" value="ATPase domain of HSP90 chaperone/DNA topoisomerase II/histidine kinase"/>
    <property type="match status" value="1"/>
</dbReference>
<dbReference type="SUPFAM" id="SSF54211">
    <property type="entry name" value="Ribosomal protein S5 domain 2-like"/>
    <property type="match status" value="1"/>
</dbReference>
<dbReference type="SUPFAM" id="SSF56719">
    <property type="entry name" value="Type II DNA topoisomerase"/>
    <property type="match status" value="1"/>
</dbReference>
<dbReference type="PROSITE" id="PS00177">
    <property type="entry name" value="TOPOISOMERASE_II"/>
    <property type="match status" value="1"/>
</dbReference>
<dbReference type="PROSITE" id="PS50880">
    <property type="entry name" value="TOPRIM"/>
    <property type="match status" value="1"/>
</dbReference>
<reference key="1">
    <citation type="journal article" date="2002" name="Lancet">
        <title>Genome and virulence determinants of high virulence community-acquired MRSA.</title>
        <authorList>
            <person name="Baba T."/>
            <person name="Takeuchi F."/>
            <person name="Kuroda M."/>
            <person name="Yuzawa H."/>
            <person name="Aoki K."/>
            <person name="Oguchi A."/>
            <person name="Nagai Y."/>
            <person name="Iwama N."/>
            <person name="Asano K."/>
            <person name="Naimi T."/>
            <person name="Kuroda H."/>
            <person name="Cui L."/>
            <person name="Yamamoto K."/>
            <person name="Hiramatsu K."/>
        </authorList>
    </citation>
    <scope>NUCLEOTIDE SEQUENCE [LARGE SCALE GENOMIC DNA]</scope>
    <source>
        <strain>MW2</strain>
    </source>
</reference>
<evidence type="ECO:0000255" key="1">
    <source>
        <dbReference type="HAMAP-Rule" id="MF_00939"/>
    </source>
</evidence>
<evidence type="ECO:0000256" key="2">
    <source>
        <dbReference type="SAM" id="MobiDB-lite"/>
    </source>
</evidence>
<evidence type="ECO:0000305" key="3"/>
<keyword id="KW-0067">ATP-binding</keyword>
<keyword id="KW-0238">DNA-binding</keyword>
<keyword id="KW-0413">Isomerase</keyword>
<keyword id="KW-0460">Magnesium</keyword>
<keyword id="KW-0479">Metal-binding</keyword>
<keyword id="KW-0547">Nucleotide-binding</keyword>
<keyword id="KW-0799">Topoisomerase</keyword>
<accession>P0A0K9</accession>
<accession>P50072</accession>
<organism>
    <name type="scientific">Staphylococcus aureus (strain MW2)</name>
    <dbReference type="NCBI Taxonomy" id="196620"/>
    <lineage>
        <taxon>Bacteria</taxon>
        <taxon>Bacillati</taxon>
        <taxon>Bacillota</taxon>
        <taxon>Bacilli</taxon>
        <taxon>Bacillales</taxon>
        <taxon>Staphylococcaceae</taxon>
        <taxon>Staphylococcus</taxon>
    </lineage>
</organism>
<protein>
    <recommendedName>
        <fullName evidence="1">DNA topoisomerase 4 subunit B</fullName>
        <ecNumber evidence="1">5.6.2.2</ecNumber>
    </recommendedName>
    <alternativeName>
        <fullName evidence="1">Topoisomerase IV subunit B</fullName>
    </alternativeName>
</protein>
<gene>
    <name evidence="1" type="primary">parE</name>
    <name type="synonym">grlB</name>
    <name type="ordered locus">MW1241</name>
</gene>
<name>PARE_STAAW</name>